<reference key="1">
    <citation type="journal article" date="2004" name="Nature">
        <title>Mutations in VKORC1 cause warfarin resistance and multiple coagulation factor deficiency type 2.</title>
        <authorList>
            <person name="Rost S."/>
            <person name="Fregin A."/>
            <person name="Ivaskevicius V."/>
            <person name="Conzelmann E."/>
            <person name="Hoertnagel K."/>
            <person name="Pelz H.-J."/>
            <person name="Lappegard K."/>
            <person name="Seifried E."/>
            <person name="Scharrer I."/>
            <person name="Tuddenham E.G.D."/>
            <person name="Mueller C.R."/>
            <person name="Strom T.M."/>
            <person name="Oldenburg J."/>
        </authorList>
    </citation>
    <scope>NUCLEOTIDE SEQUENCE [MRNA] (ISOFORM 1)</scope>
    <source>
        <tissue>Kidney</tissue>
    </source>
</reference>
<reference key="2">
    <citation type="journal article" date="2004" name="Nat. Genet.">
        <title>Complete sequencing and characterization of 21,243 full-length human cDNAs.</title>
        <authorList>
            <person name="Ota T."/>
            <person name="Suzuki Y."/>
            <person name="Nishikawa T."/>
            <person name="Otsuki T."/>
            <person name="Sugiyama T."/>
            <person name="Irie R."/>
            <person name="Wakamatsu A."/>
            <person name="Hayashi K."/>
            <person name="Sato H."/>
            <person name="Nagai K."/>
            <person name="Kimura K."/>
            <person name="Makita H."/>
            <person name="Sekine M."/>
            <person name="Obayashi M."/>
            <person name="Nishi T."/>
            <person name="Shibahara T."/>
            <person name="Tanaka T."/>
            <person name="Ishii S."/>
            <person name="Yamamoto J."/>
            <person name="Saito K."/>
            <person name="Kawai Y."/>
            <person name="Isono Y."/>
            <person name="Nakamura Y."/>
            <person name="Nagahari K."/>
            <person name="Murakami K."/>
            <person name="Yasuda T."/>
            <person name="Iwayanagi T."/>
            <person name="Wagatsuma M."/>
            <person name="Shiratori A."/>
            <person name="Sudo H."/>
            <person name="Hosoiri T."/>
            <person name="Kaku Y."/>
            <person name="Kodaira H."/>
            <person name="Kondo H."/>
            <person name="Sugawara M."/>
            <person name="Takahashi M."/>
            <person name="Kanda K."/>
            <person name="Yokoi T."/>
            <person name="Furuya T."/>
            <person name="Kikkawa E."/>
            <person name="Omura Y."/>
            <person name="Abe K."/>
            <person name="Kamihara K."/>
            <person name="Katsuta N."/>
            <person name="Sato K."/>
            <person name="Tanikawa M."/>
            <person name="Yamazaki M."/>
            <person name="Ninomiya K."/>
            <person name="Ishibashi T."/>
            <person name="Yamashita H."/>
            <person name="Murakawa K."/>
            <person name="Fujimori K."/>
            <person name="Tanai H."/>
            <person name="Kimata M."/>
            <person name="Watanabe M."/>
            <person name="Hiraoka S."/>
            <person name="Chiba Y."/>
            <person name="Ishida S."/>
            <person name="Ono Y."/>
            <person name="Takiguchi S."/>
            <person name="Watanabe S."/>
            <person name="Yosida M."/>
            <person name="Hotuta T."/>
            <person name="Kusano J."/>
            <person name="Kanehori K."/>
            <person name="Takahashi-Fujii A."/>
            <person name="Hara H."/>
            <person name="Tanase T.-O."/>
            <person name="Nomura Y."/>
            <person name="Togiya S."/>
            <person name="Komai F."/>
            <person name="Hara R."/>
            <person name="Takeuchi K."/>
            <person name="Arita M."/>
            <person name="Imose N."/>
            <person name="Musashino K."/>
            <person name="Yuuki H."/>
            <person name="Oshima A."/>
            <person name="Sasaki N."/>
            <person name="Aotsuka S."/>
            <person name="Yoshikawa Y."/>
            <person name="Matsunawa H."/>
            <person name="Ichihara T."/>
            <person name="Shiohata N."/>
            <person name="Sano S."/>
            <person name="Moriya S."/>
            <person name="Momiyama H."/>
            <person name="Satoh N."/>
            <person name="Takami S."/>
            <person name="Terashima Y."/>
            <person name="Suzuki O."/>
            <person name="Nakagawa S."/>
            <person name="Senoh A."/>
            <person name="Mizoguchi H."/>
            <person name="Goto Y."/>
            <person name="Shimizu F."/>
            <person name="Wakebe H."/>
            <person name="Hishigaki H."/>
            <person name="Watanabe T."/>
            <person name="Sugiyama A."/>
            <person name="Takemoto M."/>
            <person name="Kawakami B."/>
            <person name="Yamazaki M."/>
            <person name="Watanabe K."/>
            <person name="Kumagai A."/>
            <person name="Itakura S."/>
            <person name="Fukuzumi Y."/>
            <person name="Fujimori Y."/>
            <person name="Komiyama M."/>
            <person name="Tashiro H."/>
            <person name="Tanigami A."/>
            <person name="Fujiwara T."/>
            <person name="Ono T."/>
            <person name="Yamada K."/>
            <person name="Fujii Y."/>
            <person name="Ozaki K."/>
            <person name="Hirao M."/>
            <person name="Ohmori Y."/>
            <person name="Kawabata A."/>
            <person name="Hikiji T."/>
            <person name="Kobatake N."/>
            <person name="Inagaki H."/>
            <person name="Ikema Y."/>
            <person name="Okamoto S."/>
            <person name="Okitani R."/>
            <person name="Kawakami T."/>
            <person name="Noguchi S."/>
            <person name="Itoh T."/>
            <person name="Shigeta K."/>
            <person name="Senba T."/>
            <person name="Matsumura K."/>
            <person name="Nakajima Y."/>
            <person name="Mizuno T."/>
            <person name="Morinaga M."/>
            <person name="Sasaki M."/>
            <person name="Togashi T."/>
            <person name="Oyama M."/>
            <person name="Hata H."/>
            <person name="Watanabe M."/>
            <person name="Komatsu T."/>
            <person name="Mizushima-Sugano J."/>
            <person name="Satoh T."/>
            <person name="Shirai Y."/>
            <person name="Takahashi Y."/>
            <person name="Nakagawa K."/>
            <person name="Okumura K."/>
            <person name="Nagase T."/>
            <person name="Nomura N."/>
            <person name="Kikuchi H."/>
            <person name="Masuho Y."/>
            <person name="Yamashita R."/>
            <person name="Nakai K."/>
            <person name="Yada T."/>
            <person name="Nakamura Y."/>
            <person name="Ohara O."/>
            <person name="Isogai T."/>
            <person name="Sugano S."/>
        </authorList>
    </citation>
    <scope>NUCLEOTIDE SEQUENCE [LARGE SCALE MRNA] (ISOFORM 2)</scope>
    <source>
        <tissue>Trachea</tissue>
    </source>
</reference>
<reference key="3">
    <citation type="journal article" date="2003" name="Nature">
        <title>The DNA sequence of human chromosome 7.</title>
        <authorList>
            <person name="Hillier L.W."/>
            <person name="Fulton R.S."/>
            <person name="Fulton L.A."/>
            <person name="Graves T.A."/>
            <person name="Pepin K.H."/>
            <person name="Wagner-McPherson C."/>
            <person name="Layman D."/>
            <person name="Maas J."/>
            <person name="Jaeger S."/>
            <person name="Walker R."/>
            <person name="Wylie K."/>
            <person name="Sekhon M."/>
            <person name="Becker M.C."/>
            <person name="O'Laughlin M.D."/>
            <person name="Schaller M.E."/>
            <person name="Fewell G.A."/>
            <person name="Delehaunty K.D."/>
            <person name="Miner T.L."/>
            <person name="Nash W.E."/>
            <person name="Cordes M."/>
            <person name="Du H."/>
            <person name="Sun H."/>
            <person name="Edwards J."/>
            <person name="Bradshaw-Cordum H."/>
            <person name="Ali J."/>
            <person name="Andrews S."/>
            <person name="Isak A."/>
            <person name="Vanbrunt A."/>
            <person name="Nguyen C."/>
            <person name="Du F."/>
            <person name="Lamar B."/>
            <person name="Courtney L."/>
            <person name="Kalicki J."/>
            <person name="Ozersky P."/>
            <person name="Bielicki L."/>
            <person name="Scott K."/>
            <person name="Holmes A."/>
            <person name="Harkins R."/>
            <person name="Harris A."/>
            <person name="Strong C.M."/>
            <person name="Hou S."/>
            <person name="Tomlinson C."/>
            <person name="Dauphin-Kohlberg S."/>
            <person name="Kozlowicz-Reilly A."/>
            <person name="Leonard S."/>
            <person name="Rohlfing T."/>
            <person name="Rock S.M."/>
            <person name="Tin-Wollam A.-M."/>
            <person name="Abbott A."/>
            <person name="Minx P."/>
            <person name="Maupin R."/>
            <person name="Strowmatt C."/>
            <person name="Latreille P."/>
            <person name="Miller N."/>
            <person name="Johnson D."/>
            <person name="Murray J."/>
            <person name="Woessner J.P."/>
            <person name="Wendl M.C."/>
            <person name="Yang S.-P."/>
            <person name="Schultz B.R."/>
            <person name="Wallis J.W."/>
            <person name="Spieth J."/>
            <person name="Bieri T.A."/>
            <person name="Nelson J.O."/>
            <person name="Berkowicz N."/>
            <person name="Wohldmann P.E."/>
            <person name="Cook L.L."/>
            <person name="Hickenbotham M.T."/>
            <person name="Eldred J."/>
            <person name="Williams D."/>
            <person name="Bedell J.A."/>
            <person name="Mardis E.R."/>
            <person name="Clifton S.W."/>
            <person name="Chissoe S.L."/>
            <person name="Marra M.A."/>
            <person name="Raymond C."/>
            <person name="Haugen E."/>
            <person name="Gillett W."/>
            <person name="Zhou Y."/>
            <person name="James R."/>
            <person name="Phelps K."/>
            <person name="Iadanoto S."/>
            <person name="Bubb K."/>
            <person name="Simms E."/>
            <person name="Levy R."/>
            <person name="Clendenning J."/>
            <person name="Kaul R."/>
            <person name="Kent W.J."/>
            <person name="Furey T.S."/>
            <person name="Baertsch R.A."/>
            <person name="Brent M.R."/>
            <person name="Keibler E."/>
            <person name="Flicek P."/>
            <person name="Bork P."/>
            <person name="Suyama M."/>
            <person name="Bailey J.A."/>
            <person name="Portnoy M.E."/>
            <person name="Torrents D."/>
            <person name="Chinwalla A.T."/>
            <person name="Gish W.R."/>
            <person name="Eddy S.R."/>
            <person name="McPherson J.D."/>
            <person name="Olson M.V."/>
            <person name="Eichler E.E."/>
            <person name="Green E.D."/>
            <person name="Waterston R.H."/>
            <person name="Wilson R.K."/>
        </authorList>
    </citation>
    <scope>NUCLEOTIDE SEQUENCE [LARGE SCALE GENOMIC DNA]</scope>
</reference>
<reference key="4">
    <citation type="journal article" date="2004" name="Genome Res.">
        <title>The status, quality, and expansion of the NIH full-length cDNA project: the Mammalian Gene Collection (MGC).</title>
        <authorList>
            <consortium name="The MGC Project Team"/>
        </authorList>
    </citation>
    <scope>NUCLEOTIDE SEQUENCE [LARGE SCALE MRNA] (ISOFORM 1)</scope>
    <source>
        <tissue>Lymph</tissue>
    </source>
</reference>
<reference key="5">
    <citation type="journal article" date="2007" name="BMC Genomics">
        <title>The full-ORF clone resource of the German cDNA consortium.</title>
        <authorList>
            <person name="Bechtel S."/>
            <person name="Rosenfelder H."/>
            <person name="Duda A."/>
            <person name="Schmidt C.P."/>
            <person name="Ernst U."/>
            <person name="Wellenreuther R."/>
            <person name="Mehrle A."/>
            <person name="Schuster C."/>
            <person name="Bahr A."/>
            <person name="Bloecker H."/>
            <person name="Heubner D."/>
            <person name="Hoerlein A."/>
            <person name="Michel G."/>
            <person name="Wedler H."/>
            <person name="Koehrer K."/>
            <person name="Ottenwaelder B."/>
            <person name="Poustka A."/>
            <person name="Wiemann S."/>
            <person name="Schupp I."/>
        </authorList>
    </citation>
    <scope>NUCLEOTIDE SEQUENCE [LARGE SCALE MRNA] OF 71-176 (ISOFORM 1)</scope>
    <source>
        <tissue>Melanoma</tissue>
    </source>
</reference>
<reference key="6">
    <citation type="journal article" date="2011" name="BMC Syst. Biol.">
        <title>Initial characterization of the human central proteome.</title>
        <authorList>
            <person name="Burkard T.R."/>
            <person name="Planyavsky M."/>
            <person name="Kaupe I."/>
            <person name="Breitwieser F.P."/>
            <person name="Buerckstuemmer T."/>
            <person name="Bennett K.L."/>
            <person name="Superti-Furga G."/>
            <person name="Colinge J."/>
        </authorList>
    </citation>
    <scope>IDENTIFICATION BY MASS SPECTROMETRY [LARGE SCALE ANALYSIS]</scope>
</reference>
<reference key="7">
    <citation type="journal article" date="2011" name="J. Biol. Chem.">
        <title>Human vitamin K 2,3-epoxide reductase complex subunit 1-like 1 (VKORC1L1) mediates vitamin K-dependent intracellular antioxidant function.</title>
        <authorList>
            <person name="Westhofen P."/>
            <person name="Watzka M."/>
            <person name="Marinova M."/>
            <person name="Hass M."/>
            <person name="Kirfel G."/>
            <person name="Muller J."/>
            <person name="Bevans C.G."/>
            <person name="Muller C.R."/>
            <person name="Oldenburg J."/>
        </authorList>
    </citation>
    <scope>SUBCELLULAR LOCATION</scope>
    <scope>FUNCTION</scope>
    <scope>CATALYTIC ACTIVITY</scope>
    <scope>ACTIVITY REGULATION</scope>
    <scope>INDUCTION BY OXIDATIVE STRESS</scope>
</reference>
<reference key="8">
    <citation type="journal article" date="2012" name="Proc. Natl. Acad. Sci. U.S.A.">
        <title>N-terminal acetylome analyses and functional insights of the N-terminal acetyltransferase NatB.</title>
        <authorList>
            <person name="Van Damme P."/>
            <person name="Lasa M."/>
            <person name="Polevoda B."/>
            <person name="Gazquez C."/>
            <person name="Elosegui-Artola A."/>
            <person name="Kim D.S."/>
            <person name="De Juan-Pardo E."/>
            <person name="Demeyer K."/>
            <person name="Hole K."/>
            <person name="Larrea E."/>
            <person name="Timmerman E."/>
            <person name="Prieto J."/>
            <person name="Arnesen T."/>
            <person name="Sherman F."/>
            <person name="Gevaert K."/>
            <person name="Aldabe R."/>
        </authorList>
    </citation>
    <scope>IDENTIFICATION BY MASS SPECTROMETRY [LARGE SCALE ANALYSIS]</scope>
</reference>
<reference key="9">
    <citation type="journal article" date="2013" name="J. Biol. Chem.">
        <title>VKORC1L1, an enzyme rescuing the vitamin K 2,3-epoxide reductase activity in some extrahepatic tissues during anticoagulation therapy.</title>
        <authorList>
            <person name="Hammed A."/>
            <person name="Matagrin B."/>
            <person name="Spohn G."/>
            <person name="Prouillac C."/>
            <person name="Benoit E."/>
            <person name="Lattard V."/>
        </authorList>
    </citation>
    <scope>FUNCTION</scope>
    <scope>CATALYTIC ACTIVITY</scope>
    <scope>ACTIVITY REGULATION</scope>
</reference>
<reference key="10">
    <citation type="journal article" date="2014" name="J. Biol. Chem.">
        <title>Conserved loop cysteines of vitamin K epoxide reductase complex subunit 1-like 1 (VKORC1L1) are involved in its active site regeneration.</title>
        <authorList>
            <person name="Tie J.K."/>
            <person name="Jin D.Y."/>
            <person name="Stafford D.W."/>
        </authorList>
    </citation>
    <scope>TOPOLOGY</scope>
    <scope>SUBCELLULAR LOCATION</scope>
    <scope>FUNCTION</scope>
    <scope>CATALYTIC ACTIVITY</scope>
    <scope>ACTIVITY REGULATION</scope>
    <scope>MUTAGENESIS OF CYS-50 AND CYS-58</scope>
</reference>
<reference key="11">
    <citation type="journal article" date="2015" name="Proteomics">
        <title>N-terminome analysis of the human mitochondrial proteome.</title>
        <authorList>
            <person name="Vaca Jacome A.S."/>
            <person name="Rabilloud T."/>
            <person name="Schaeffer-Reiss C."/>
            <person name="Rompais M."/>
            <person name="Ayoub D."/>
            <person name="Lane L."/>
            <person name="Bairoch A."/>
            <person name="Van Dorsselaer A."/>
            <person name="Carapito C."/>
        </authorList>
    </citation>
    <scope>IDENTIFICATION BY MASS SPECTROMETRY [LARGE SCALE ANALYSIS]</scope>
</reference>
<accession>Q8N0U8</accession>
<accession>B4E222</accession>
<accession>E7ETM5</accession>
<accession>Q6AHW9</accession>
<accession>Q6TEK6</accession>
<gene>
    <name type="primary">VKORC1L1</name>
</gene>
<dbReference type="EC" id="1.17.4.4" evidence="2 3 4"/>
<dbReference type="EMBL" id="AY423045">
    <property type="protein sequence ID" value="AAR82915.1"/>
    <property type="molecule type" value="mRNA"/>
</dbReference>
<dbReference type="EMBL" id="AK304077">
    <property type="protein sequence ID" value="BAG64984.1"/>
    <property type="molecule type" value="mRNA"/>
</dbReference>
<dbReference type="EMBL" id="AC073261">
    <property type="status" value="NOT_ANNOTATED_CDS"/>
    <property type="molecule type" value="Genomic_DNA"/>
</dbReference>
<dbReference type="EMBL" id="AC093485">
    <property type="status" value="NOT_ANNOTATED_CDS"/>
    <property type="molecule type" value="Genomic_DNA"/>
</dbReference>
<dbReference type="EMBL" id="AC093582">
    <property type="status" value="NOT_ANNOTATED_CDS"/>
    <property type="molecule type" value="Genomic_DNA"/>
</dbReference>
<dbReference type="EMBL" id="BC027734">
    <property type="protein sequence ID" value="AAH27734.2"/>
    <property type="molecule type" value="mRNA"/>
</dbReference>
<dbReference type="EMBL" id="CR627471">
    <property type="protein sequence ID" value="CAH10673.1"/>
    <property type="molecule type" value="mRNA"/>
</dbReference>
<dbReference type="CCDS" id="CCDS5529.1">
    <molecule id="Q8N0U8-1"/>
</dbReference>
<dbReference type="CCDS" id="CCDS64663.1">
    <molecule id="Q8N0U8-2"/>
</dbReference>
<dbReference type="RefSeq" id="NP_001271271.1">
    <molecule id="Q8N0U8-2"/>
    <property type="nucleotide sequence ID" value="NM_001284342.3"/>
</dbReference>
<dbReference type="RefSeq" id="NP_775788.2">
    <molecule id="Q8N0U8-1"/>
    <property type="nucleotide sequence ID" value="NM_173517.5"/>
</dbReference>
<dbReference type="SMR" id="Q8N0U8"/>
<dbReference type="BioGRID" id="127558">
    <property type="interactions" value="129"/>
</dbReference>
<dbReference type="FunCoup" id="Q8N0U8">
    <property type="interactions" value="901"/>
</dbReference>
<dbReference type="IntAct" id="Q8N0U8">
    <property type="interactions" value="76"/>
</dbReference>
<dbReference type="MINT" id="Q8N0U8"/>
<dbReference type="STRING" id="9606.ENSP00000403077"/>
<dbReference type="BindingDB" id="Q8N0U8"/>
<dbReference type="DrugBank" id="DB00170">
    <property type="generic name" value="Menadione"/>
</dbReference>
<dbReference type="DrugCentral" id="Q8N0U8"/>
<dbReference type="iPTMnet" id="Q8N0U8"/>
<dbReference type="PhosphoSitePlus" id="Q8N0U8"/>
<dbReference type="SwissPalm" id="Q8N0U8"/>
<dbReference type="BioMuta" id="VKORC1L1"/>
<dbReference type="DMDM" id="62511214"/>
<dbReference type="jPOST" id="Q8N0U8"/>
<dbReference type="MassIVE" id="Q8N0U8"/>
<dbReference type="PaxDb" id="9606-ENSP00000403077"/>
<dbReference type="PeptideAtlas" id="Q8N0U8"/>
<dbReference type="ProteomicsDB" id="18242"/>
<dbReference type="ProteomicsDB" id="71463">
    <molecule id="Q8N0U8-1"/>
</dbReference>
<dbReference type="Pumba" id="Q8N0U8"/>
<dbReference type="Antibodypedia" id="57350">
    <property type="antibodies" value="94 antibodies from 17 providers"/>
</dbReference>
<dbReference type="DNASU" id="154807"/>
<dbReference type="Ensembl" id="ENST00000360768.5">
    <molecule id="Q8N0U8-1"/>
    <property type="protein sequence ID" value="ENSP00000353998.2"/>
    <property type="gene ID" value="ENSG00000196715.7"/>
</dbReference>
<dbReference type="Ensembl" id="ENST00000434382.2">
    <molecule id="Q8N0U8-2"/>
    <property type="protein sequence ID" value="ENSP00000403077.2"/>
    <property type="gene ID" value="ENSG00000196715.7"/>
</dbReference>
<dbReference type="Ensembl" id="ENST00000648179.1">
    <molecule id="Q8N0U8-1"/>
    <property type="protein sequence ID" value="ENSP00000497394.1"/>
    <property type="gene ID" value="ENSG00000196715.7"/>
</dbReference>
<dbReference type="GeneID" id="154807"/>
<dbReference type="KEGG" id="hsa:154807"/>
<dbReference type="MANE-Select" id="ENST00000360768.5">
    <property type="protein sequence ID" value="ENSP00000353998.2"/>
    <property type="RefSeq nucleotide sequence ID" value="NM_173517.6"/>
    <property type="RefSeq protein sequence ID" value="NP_775788.2"/>
</dbReference>
<dbReference type="UCSC" id="uc003tum.3">
    <molecule id="Q8N0U8-1"/>
    <property type="organism name" value="human"/>
</dbReference>
<dbReference type="AGR" id="HGNC:21492"/>
<dbReference type="CTD" id="154807"/>
<dbReference type="DisGeNET" id="154807"/>
<dbReference type="GeneCards" id="VKORC1L1"/>
<dbReference type="HGNC" id="HGNC:21492">
    <property type="gene designation" value="VKORC1L1"/>
</dbReference>
<dbReference type="HPA" id="ENSG00000196715">
    <property type="expression patterns" value="Low tissue specificity"/>
</dbReference>
<dbReference type="MIM" id="608838">
    <property type="type" value="gene"/>
</dbReference>
<dbReference type="neXtProt" id="NX_Q8N0U8"/>
<dbReference type="OpenTargets" id="ENSG00000196715"/>
<dbReference type="PharmGKB" id="PA134931578"/>
<dbReference type="VEuPathDB" id="HostDB:ENSG00000196715"/>
<dbReference type="GeneTree" id="ENSGT00940000157044"/>
<dbReference type="HOGENOM" id="CLU_105471_0_0_1"/>
<dbReference type="InParanoid" id="Q8N0U8"/>
<dbReference type="OMA" id="EFCVVCV"/>
<dbReference type="OrthoDB" id="17010at2759"/>
<dbReference type="PAN-GO" id="Q8N0U8">
    <property type="GO annotations" value="3 GO annotations based on evolutionary models"/>
</dbReference>
<dbReference type="PhylomeDB" id="Q8N0U8"/>
<dbReference type="TreeFam" id="TF328467"/>
<dbReference type="BioCyc" id="MetaCyc:G66-30969-MONOMER"/>
<dbReference type="BRENDA" id="1.17.4.4">
    <property type="organism ID" value="2681"/>
</dbReference>
<dbReference type="BRENDA" id="1.17.4.5">
    <property type="organism ID" value="2681"/>
</dbReference>
<dbReference type="PathwayCommons" id="Q8N0U8"/>
<dbReference type="Reactome" id="R-HSA-6806664">
    <property type="pathway name" value="Metabolism of vitamin K"/>
</dbReference>
<dbReference type="SignaLink" id="Q8N0U8"/>
<dbReference type="SIGNOR" id="Q8N0U8"/>
<dbReference type="BioGRID-ORCS" id="154807">
    <property type="hits" value="44 hits in 1156 CRISPR screens"/>
</dbReference>
<dbReference type="ChiTaRS" id="VKORC1L1">
    <property type="organism name" value="human"/>
</dbReference>
<dbReference type="GenomeRNAi" id="154807"/>
<dbReference type="Pharos" id="Q8N0U8">
    <property type="development level" value="Tbio"/>
</dbReference>
<dbReference type="PRO" id="PR:Q8N0U8"/>
<dbReference type="Proteomes" id="UP000005640">
    <property type="component" value="Chromosome 7"/>
</dbReference>
<dbReference type="RNAct" id="Q8N0U8">
    <property type="molecule type" value="protein"/>
</dbReference>
<dbReference type="Bgee" id="ENSG00000196715">
    <property type="expression patterns" value="Expressed in adipose tissue and 183 other cell types or tissues"/>
</dbReference>
<dbReference type="ExpressionAtlas" id="Q8N0U8">
    <property type="expression patterns" value="baseline and differential"/>
</dbReference>
<dbReference type="GO" id="GO:0005783">
    <property type="term" value="C:endoplasmic reticulum"/>
    <property type="evidence" value="ECO:0000314"/>
    <property type="project" value="HPA"/>
</dbReference>
<dbReference type="GO" id="GO:0005789">
    <property type="term" value="C:endoplasmic reticulum membrane"/>
    <property type="evidence" value="ECO:0000314"/>
    <property type="project" value="UniProtKB"/>
</dbReference>
<dbReference type="GO" id="GO:0048038">
    <property type="term" value="F:quinone binding"/>
    <property type="evidence" value="ECO:0007669"/>
    <property type="project" value="UniProtKB-KW"/>
</dbReference>
<dbReference type="GO" id="GO:0047057">
    <property type="term" value="F:vitamin-K-epoxide reductase (warfarin-sensitive) activity"/>
    <property type="evidence" value="ECO:0000314"/>
    <property type="project" value="UniProtKB"/>
</dbReference>
<dbReference type="GO" id="GO:0034599">
    <property type="term" value="P:cellular response to oxidative stress"/>
    <property type="evidence" value="ECO:0000315"/>
    <property type="project" value="UniProtKB"/>
</dbReference>
<dbReference type="GO" id="GO:0017187">
    <property type="term" value="P:peptidyl-glutamic acid carboxylation"/>
    <property type="evidence" value="ECO:0000315"/>
    <property type="project" value="UniProtKB"/>
</dbReference>
<dbReference type="GO" id="GO:0042373">
    <property type="term" value="P:vitamin K metabolic process"/>
    <property type="evidence" value="ECO:0000314"/>
    <property type="project" value="UniProtKB"/>
</dbReference>
<dbReference type="CDD" id="cd12917">
    <property type="entry name" value="VKOR_euk"/>
    <property type="match status" value="1"/>
</dbReference>
<dbReference type="FunFam" id="1.20.1440.130:FF:000001">
    <property type="entry name" value="Vitamin K epoxide reductase complex subunit 1-like 1"/>
    <property type="match status" value="1"/>
</dbReference>
<dbReference type="Gene3D" id="1.20.1440.130">
    <property type="entry name" value="VKOR domain"/>
    <property type="match status" value="1"/>
</dbReference>
<dbReference type="InterPro" id="IPR012932">
    <property type="entry name" value="VKOR"/>
</dbReference>
<dbReference type="InterPro" id="IPR038354">
    <property type="entry name" value="VKOR_sf"/>
</dbReference>
<dbReference type="InterPro" id="IPR042406">
    <property type="entry name" value="VKORC1/VKORC1L1"/>
</dbReference>
<dbReference type="PANTHER" id="PTHR14519:SF5">
    <property type="entry name" value="VITAMIN K EPOXIDE REDUCTASE COMPLEX SUBUNIT 1-LIKE PROTEIN 1"/>
    <property type="match status" value="1"/>
</dbReference>
<dbReference type="PANTHER" id="PTHR14519">
    <property type="entry name" value="VITAMIN K EPOXIDE REDUCTASE COMPLEX, SUBUNIT 1"/>
    <property type="match status" value="1"/>
</dbReference>
<dbReference type="Pfam" id="PF07884">
    <property type="entry name" value="VKOR"/>
    <property type="match status" value="1"/>
</dbReference>
<dbReference type="SMART" id="SM00756">
    <property type="entry name" value="VKc"/>
    <property type="match status" value="1"/>
</dbReference>
<protein>
    <recommendedName>
        <fullName>Vitamin K epoxide reductase complex subunit 1-like protein 1</fullName>
        <shortName>VKORC1-like protein 1</shortName>
        <ecNumber evidence="2 3 4">1.17.4.4</ecNumber>
    </recommendedName>
</protein>
<feature type="chain" id="PRO_0000191671" description="Vitamin K epoxide reductase complex subunit 1-like protein 1">
    <location>
        <begin position="1"/>
        <end position="176"/>
    </location>
</feature>
<feature type="topological domain" description="Cytoplasmic" evidence="7">
    <location>
        <begin position="1"/>
        <end position="13"/>
    </location>
</feature>
<feature type="transmembrane region" description="Helical" evidence="1">
    <location>
        <begin position="14"/>
        <end position="36"/>
    </location>
</feature>
<feature type="topological domain" description="Lumenal" evidence="1">
    <location>
        <begin position="37"/>
        <end position="87"/>
    </location>
</feature>
<feature type="transmembrane region" description="Helical" evidence="1">
    <location>
        <begin position="88"/>
        <end position="102"/>
    </location>
</feature>
<feature type="topological domain" description="Cytoplasmic" evidence="1">
    <location>
        <begin position="103"/>
        <end position="107"/>
    </location>
</feature>
<feature type="transmembrane region" description="Helical" evidence="1">
    <location>
        <begin position="108"/>
        <end position="135"/>
    </location>
</feature>
<feature type="topological domain" description="Lumenal" evidence="1">
    <location>
        <begin position="136"/>
        <end position="138"/>
    </location>
</feature>
<feature type="transmembrane region" description="Helical" evidence="1">
    <location>
        <begin position="139"/>
        <end position="160"/>
    </location>
</feature>
<feature type="topological domain" description="Cytoplasmic" evidence="7">
    <location>
        <begin position="161"/>
        <end position="176"/>
    </location>
</feature>
<feature type="binding site" evidence="1">
    <location>
        <position position="87"/>
    </location>
    <ligand>
        <name>(S)-warfarin</name>
        <dbReference type="ChEBI" id="CHEBI:87744"/>
    </ligand>
</feature>
<feature type="binding site" evidence="1">
    <location>
        <position position="142"/>
    </location>
    <ligand>
        <name>phylloquinone</name>
        <dbReference type="ChEBI" id="CHEBI:18067"/>
    </ligand>
</feature>
<feature type="binding site" evidence="1">
    <location>
        <position position="146"/>
    </location>
    <ligand>
        <name>(S)-warfarin</name>
        <dbReference type="ChEBI" id="CHEBI:87744"/>
    </ligand>
</feature>
<feature type="binding site" evidence="1">
    <location>
        <position position="146"/>
    </location>
    <ligand>
        <name>phylloquinone</name>
        <dbReference type="ChEBI" id="CHEBI:18067"/>
    </ligand>
</feature>
<feature type="disulfide bond" description="Redox-active" evidence="1">
    <location>
        <begin position="50"/>
        <end position="58"/>
    </location>
</feature>
<feature type="disulfide bond" description="Redox-active" evidence="1">
    <location>
        <begin position="139"/>
        <end position="142"/>
    </location>
</feature>
<feature type="splice variant" id="VSP_055709" description="In isoform 2." evidence="5">
    <original>WGRGFGLLGSIFGKDGVLNQPNSVFGLIFYILQLLLGMTASAVAALILMTSSIMSVVGSLYLAYILYFVLKEFCIICIVTYVLNFLLLIINYKRLVYLNEAWKRQLQPKQD</original>
    <variation>HDSKRCGGFDPHDVLHHVGRGVPVPGLHSVLCAEGVLHHLHRHVRAELPSSHYQLQTTSLLERGLEAAAATQAGLTPDRLHPNSLKPLSIQFILQQVFIIIIIIIIHNRHFP</variation>
    <location>
        <begin position="66"/>
        <end position="176"/>
    </location>
</feature>
<feature type="mutagenesis site" description="Abolishes enzyme activity in cell-based assays. Reduces enzyme activity moderately in assays that regenerate the redox-active cysteines with dithiothreitol (in vitro)." evidence="4">
    <original>C</original>
    <variation>S</variation>
    <location>
        <position position="50"/>
    </location>
</feature>
<feature type="mutagenesis site" description="Abolishes enzyme activity in cell-based assays. Reduces enzyme activity moderately in assays that regenerate the redox-active cysteines with dithiothreitol (in vitro)." evidence="4">
    <original>C</original>
    <variation>S</variation>
    <location>
        <position position="58"/>
    </location>
</feature>
<feature type="sequence conflict" description="In Ref. 2; BAG64984." evidence="6" ref="2">
    <original>F</original>
    <variation>FI</variation>
    <location sequence="Q8N0U8-2">
        <position position="163"/>
    </location>
</feature>
<proteinExistence type="evidence at protein level"/>
<name>VKORL_HUMAN</name>
<organism>
    <name type="scientific">Homo sapiens</name>
    <name type="common">Human</name>
    <dbReference type="NCBI Taxonomy" id="9606"/>
    <lineage>
        <taxon>Eukaryota</taxon>
        <taxon>Metazoa</taxon>
        <taxon>Chordata</taxon>
        <taxon>Craniata</taxon>
        <taxon>Vertebrata</taxon>
        <taxon>Euteleostomi</taxon>
        <taxon>Mammalia</taxon>
        <taxon>Eutheria</taxon>
        <taxon>Euarchontoglires</taxon>
        <taxon>Primates</taxon>
        <taxon>Haplorrhini</taxon>
        <taxon>Catarrhini</taxon>
        <taxon>Hominidae</taxon>
        <taxon>Homo</taxon>
    </lineage>
</organism>
<keyword id="KW-0025">Alternative splicing</keyword>
<keyword id="KW-1015">Disulfide bond</keyword>
<keyword id="KW-0256">Endoplasmic reticulum</keyword>
<keyword id="KW-0472">Membrane</keyword>
<keyword id="KW-0560">Oxidoreductase</keyword>
<keyword id="KW-1267">Proteomics identification</keyword>
<keyword id="KW-0874">Quinone</keyword>
<keyword id="KW-0676">Redox-active center</keyword>
<keyword id="KW-1185">Reference proteome</keyword>
<keyword id="KW-0812">Transmembrane</keyword>
<keyword id="KW-1133">Transmembrane helix</keyword>
<evidence type="ECO:0000250" key="1">
    <source>
        <dbReference type="UniProtKB" id="Q6TEK8"/>
    </source>
</evidence>
<evidence type="ECO:0000269" key="2">
    <source>
    </source>
</evidence>
<evidence type="ECO:0000269" key="3">
    <source>
    </source>
</evidence>
<evidence type="ECO:0000269" key="4">
    <source>
    </source>
</evidence>
<evidence type="ECO:0000303" key="5">
    <source>
    </source>
</evidence>
<evidence type="ECO:0000305" key="6"/>
<evidence type="ECO:0000305" key="7">
    <source>
    </source>
</evidence>
<comment type="function">
    <text evidence="2 3 4">Involved in vitamin K metabolism. Can reduce inactive vitamin K 2,3-epoxide to active vitamin K, and may contribute to vitamin K-mediated protection against oxidative stress. Plays a role in vitamin K-dependent gamma-carboxylation of Glu residues in target proteins.</text>
</comment>
<comment type="catalytic activity">
    <reaction evidence="2 3 4">
        <text>phylloquinone + [protein]-disulfide + H2O = 2,3-epoxyphylloquinone + [protein]-dithiol</text>
        <dbReference type="Rhea" id="RHEA:13817"/>
        <dbReference type="Rhea" id="RHEA-COMP:10593"/>
        <dbReference type="Rhea" id="RHEA-COMP:10594"/>
        <dbReference type="ChEBI" id="CHEBI:15377"/>
        <dbReference type="ChEBI" id="CHEBI:15759"/>
        <dbReference type="ChEBI" id="CHEBI:18067"/>
        <dbReference type="ChEBI" id="CHEBI:29950"/>
        <dbReference type="ChEBI" id="CHEBI:50058"/>
        <dbReference type="EC" id="1.17.4.4"/>
    </reaction>
    <physiologicalReaction direction="right-to-left" evidence="2 3 4">
        <dbReference type="Rhea" id="RHEA:13819"/>
    </physiologicalReaction>
</comment>
<comment type="catalytic activity">
    <reaction evidence="2 3 4">
        <text>phylloquinol + [protein]-disulfide = phylloquinone + [protein]-dithiol</text>
        <dbReference type="Rhea" id="RHEA:57744"/>
        <dbReference type="Rhea" id="RHEA-COMP:10593"/>
        <dbReference type="Rhea" id="RHEA-COMP:10594"/>
        <dbReference type="ChEBI" id="CHEBI:18067"/>
        <dbReference type="ChEBI" id="CHEBI:28433"/>
        <dbReference type="ChEBI" id="CHEBI:29950"/>
        <dbReference type="ChEBI" id="CHEBI:50058"/>
        <dbReference type="EC" id="1.17.4.4"/>
    </reaction>
    <physiologicalReaction direction="right-to-left" evidence="2 3 4">
        <dbReference type="Rhea" id="RHEA:57746"/>
    </physiologicalReaction>
</comment>
<comment type="activity regulation">
    <text evidence="1 2 3 4">Inhibited by warfarin (coumadin) (PubMed:21367861, PubMed:23928358, PubMed:24532791). Warfarin locks VKORC1 in both redox states into the closed conformation (By similarity).</text>
</comment>
<comment type="interaction">
    <interactant intactId="EBI-11337915">
        <id>Q8N0U8</id>
    </interactant>
    <interactant intactId="EBI-751728">
        <id>P01019</id>
        <label>AGT</label>
    </interactant>
    <organismsDiffer>false</organismsDiffer>
    <experiments>3</experiments>
</comment>
<comment type="interaction">
    <interactant intactId="EBI-11337915">
        <id>Q8N0U8</id>
    </interactant>
    <interactant intactId="EBI-13059134">
        <id>Q13520</id>
        <label>AQP6</label>
    </interactant>
    <organismsDiffer>false</organismsDiffer>
    <experiments>3</experiments>
</comment>
<comment type="interaction">
    <interactant intactId="EBI-11337915">
        <id>Q8N0U8</id>
    </interactant>
    <interactant intactId="EBI-2837444">
        <id>Q8WUW1</id>
        <label>BRK1</label>
    </interactant>
    <organismsDiffer>false</organismsDiffer>
    <experiments>3</experiments>
</comment>
<comment type="interaction">
    <interactant intactId="EBI-11337915">
        <id>Q8N0U8</id>
    </interactant>
    <interactant intactId="EBI-357407">
        <id>P78371</id>
        <label>CCT2</label>
    </interactant>
    <organismsDiffer>false</organismsDiffer>
    <experiments>3</experiments>
</comment>
<comment type="interaction">
    <interactant intactId="EBI-11337915">
        <id>Q8N0U8</id>
    </interactant>
    <interactant intactId="EBI-1045797">
        <id>Q8N5K1</id>
        <label>CISD2</label>
    </interactant>
    <organismsDiffer>false</organismsDiffer>
    <experiments>3</experiments>
</comment>
<comment type="interaction">
    <interactant intactId="EBI-11337915">
        <id>Q8N0U8</id>
    </interactant>
    <interactant intactId="EBI-781551">
        <id>Q9Y282</id>
        <label>ERGIC3</label>
    </interactant>
    <organismsDiffer>false</organismsDiffer>
    <experiments>3</experiments>
</comment>
<comment type="interaction">
    <interactant intactId="EBI-11337915">
        <id>Q8N0U8</id>
    </interactant>
    <interactant intactId="EBI-3917143">
        <id>Q5T7V8</id>
        <label>GORAB</label>
    </interactant>
    <organismsDiffer>false</organismsDiffer>
    <experiments>3</experiments>
</comment>
<comment type="interaction">
    <interactant intactId="EBI-11337915">
        <id>Q8N0U8</id>
    </interactant>
    <interactant intactId="EBI-11721746">
        <id>Q8TED1</id>
        <label>GPX8</label>
    </interactant>
    <organismsDiffer>false</organismsDiffer>
    <experiments>3</experiments>
</comment>
<comment type="interaction">
    <interactant intactId="EBI-11337915">
        <id>Q8N0U8</id>
    </interactant>
    <interactant intactId="EBI-10087153">
        <id>P03952</id>
        <label>KLKB1</label>
    </interactant>
    <organismsDiffer>false</organismsDiffer>
    <experiments>3</experiments>
</comment>
<comment type="interaction">
    <interactant intactId="EBI-11337915">
        <id>Q8N0U8</id>
    </interactant>
    <interactant intactId="EBI-715909">
        <id>P06858</id>
        <label>LPL</label>
    </interactant>
    <organismsDiffer>false</organismsDiffer>
    <experiments>3</experiments>
</comment>
<comment type="interaction">
    <interactant intactId="EBI-11337915">
        <id>Q8N0U8</id>
    </interactant>
    <interactant intactId="EBI-5454865">
        <id>Q6IN84</id>
        <label>MRM1</label>
    </interactant>
    <organismsDiffer>false</organismsDiffer>
    <experiments>3</experiments>
</comment>
<comment type="interaction">
    <interactant intactId="EBI-11337915">
        <id>Q8N0U8</id>
    </interactant>
    <interactant intactId="EBI-12806656">
        <id>Q96HJ5</id>
        <label>MS4A3</label>
    </interactant>
    <organismsDiffer>false</organismsDiffer>
    <experiments>3</experiments>
</comment>
<comment type="interaction">
    <interactant intactId="EBI-11337915">
        <id>Q8N0U8</id>
    </interactant>
    <interactant intactId="EBI-3923617">
        <id>Q9H2K0</id>
        <label>MTIF3</label>
    </interactant>
    <organismsDiffer>false</organismsDiffer>
    <experiments>3</experiments>
</comment>
<comment type="interaction">
    <interactant intactId="EBI-11337915">
        <id>Q8N0U8</id>
    </interactant>
    <interactant intactId="EBI-2563309">
        <id>P49585</id>
        <label>PCYT1A</label>
    </interactant>
    <organismsDiffer>false</organismsDiffer>
    <experiments>4</experiments>
</comment>
<comment type="interaction">
    <interactant intactId="EBI-11337915">
        <id>Q8N0U8</id>
    </interactant>
    <interactant intactId="EBI-12280028">
        <id>Q9Y5K3-3</id>
        <label>PCYT1B</label>
    </interactant>
    <organismsDiffer>false</organismsDiffer>
    <experiments>8</experiments>
</comment>
<comment type="interaction">
    <interactant intactId="EBI-11337915">
        <id>Q8N0U8</id>
    </interactant>
    <interactant intactId="EBI-11742770">
        <id>Q96HE8</id>
        <label>TMEM80</label>
    </interactant>
    <organismsDiffer>false</organismsDiffer>
    <experiments>3</experiments>
</comment>
<comment type="interaction">
    <interactant intactId="EBI-11337915">
        <id>Q8N0U8</id>
    </interactant>
    <interactant intactId="EBI-12157263">
        <id>P40337-2</id>
        <label>VHL</label>
    </interactant>
    <organismsDiffer>false</organismsDiffer>
    <experiments>3</experiments>
</comment>
<comment type="subcellular location">
    <subcellularLocation>
        <location evidence="2 4">Endoplasmic reticulum membrane</location>
        <topology evidence="2 4">Multi-pass membrane protein</topology>
    </subcellularLocation>
</comment>
<comment type="alternative products">
    <event type="alternative splicing"/>
    <isoform>
        <id>Q8N0U8-1</id>
        <name>1</name>
        <sequence type="displayed"/>
    </isoform>
    <isoform>
        <id>Q8N0U8-2</id>
        <name>2</name>
        <sequence type="described" ref="VSP_055709"/>
    </isoform>
</comment>
<comment type="induction">
    <text evidence="2">Up-regulated in response to oxidative stress induced by hydrogen peroxide treatment.</text>
</comment>
<comment type="similarity">
    <text evidence="6">Belongs to the VKOR family.</text>
</comment>
<sequence length="176" mass="19836">MAAPVLLRVSVPRWERVARYAVCAAGILLSIYAYHVEREKERDPEHRALCDLGPWVKCSAALASRWGRGFGLLGSIFGKDGVLNQPNSVFGLIFYILQLLLGMTASAVAALILMTSSIMSVVGSLYLAYILYFVLKEFCIICIVTYVLNFLLLIINYKRLVYLNEAWKRQLQPKQD</sequence>